<sequence length="80" mass="8488">MKVAVIFLLSALALLSLAGNTFSAKVTGKEASCHDAVAGCPRIYDPVCGTDGITYANECVLCFENRKRIEPVLIRKGGPC</sequence>
<name>ISK1_MOUSE</name>
<evidence type="ECO:0000255" key="1"/>
<evidence type="ECO:0000255" key="2">
    <source>
        <dbReference type="PROSITE-ProRule" id="PRU00798"/>
    </source>
</evidence>
<evidence type="ECO:0000269" key="3">
    <source>
    </source>
</evidence>
<evidence type="ECO:0000269" key="4">
    <source>
    </source>
</evidence>
<evidence type="ECO:0000269" key="5">
    <source>
    </source>
</evidence>
<evidence type="ECO:0000269" key="6">
    <source>
    </source>
</evidence>
<evidence type="ECO:0000269" key="7">
    <source>
    </source>
</evidence>
<evidence type="ECO:0000269" key="8">
    <source>
    </source>
</evidence>
<evidence type="ECO:0000303" key="9">
    <source>
    </source>
</evidence>
<evidence type="ECO:0000303" key="10">
    <source>
    </source>
</evidence>
<evidence type="ECO:0000303" key="11">
    <source>
    </source>
</evidence>
<evidence type="ECO:0000312" key="12">
    <source>
        <dbReference type="MGI" id="MGI:106202"/>
    </source>
</evidence>
<gene>
    <name evidence="12" type="primary">Spink1</name>
    <name evidence="10" type="synonym">Spink3</name>
</gene>
<dbReference type="EMBL" id="X06342">
    <property type="protein sequence ID" value="CAA29648.1"/>
    <property type="molecule type" value="mRNA"/>
</dbReference>
<dbReference type="EMBL" id="AK007841">
    <property type="protein sequence ID" value="BAB25298.1"/>
    <property type="molecule type" value="mRNA"/>
</dbReference>
<dbReference type="EMBL" id="AK007985">
    <property type="protein sequence ID" value="BAB25389.1"/>
    <property type="molecule type" value="mRNA"/>
</dbReference>
<dbReference type="EMBL" id="BC086887">
    <property type="protein sequence ID" value="AAH86887.1"/>
    <property type="molecule type" value="mRNA"/>
</dbReference>
<dbReference type="CCDS" id="CCDS37803.1"/>
<dbReference type="PIR" id="S01498">
    <property type="entry name" value="S01498"/>
</dbReference>
<dbReference type="RefSeq" id="NP_033284.1">
    <property type="nucleotide sequence ID" value="NM_009258.5"/>
</dbReference>
<dbReference type="SMR" id="P09036"/>
<dbReference type="BioGRID" id="203452">
    <property type="interactions" value="1"/>
</dbReference>
<dbReference type="FunCoup" id="P09036">
    <property type="interactions" value="144"/>
</dbReference>
<dbReference type="STRING" id="10090.ENSMUSP00000025381"/>
<dbReference type="MEROPS" id="I01.011"/>
<dbReference type="PhosphoSitePlus" id="P09036"/>
<dbReference type="PaxDb" id="10090-ENSMUSP00000025381"/>
<dbReference type="PeptideAtlas" id="P09036"/>
<dbReference type="ProteomicsDB" id="269509"/>
<dbReference type="Antibodypedia" id="27654">
    <property type="antibodies" value="272 antibodies from 32 providers"/>
</dbReference>
<dbReference type="DNASU" id="20730"/>
<dbReference type="Ensembl" id="ENSMUST00000025381.4">
    <property type="protein sequence ID" value="ENSMUSP00000025381.3"/>
    <property type="gene ID" value="ENSMUSG00000024503.4"/>
</dbReference>
<dbReference type="GeneID" id="20730"/>
<dbReference type="KEGG" id="mmu:20730"/>
<dbReference type="UCSC" id="uc008eul.2">
    <property type="organism name" value="mouse"/>
</dbReference>
<dbReference type="AGR" id="MGI:106202"/>
<dbReference type="CTD" id="6690"/>
<dbReference type="MGI" id="MGI:106202">
    <property type="gene designation" value="Spink1"/>
</dbReference>
<dbReference type="VEuPathDB" id="HostDB:ENSMUSG00000024503"/>
<dbReference type="eggNOG" id="KOG3649">
    <property type="taxonomic scope" value="Eukaryota"/>
</dbReference>
<dbReference type="GeneTree" id="ENSGT00530000064228"/>
<dbReference type="HOGENOM" id="CLU_169765_2_1_1"/>
<dbReference type="InParanoid" id="P09036"/>
<dbReference type="OMA" id="REAKCNN"/>
<dbReference type="OrthoDB" id="126772at2759"/>
<dbReference type="PhylomeDB" id="P09036"/>
<dbReference type="BioGRID-ORCS" id="20730">
    <property type="hits" value="4 hits in 79 CRISPR screens"/>
</dbReference>
<dbReference type="ChiTaRS" id="Spink1">
    <property type="organism name" value="mouse"/>
</dbReference>
<dbReference type="PRO" id="PR:P09036"/>
<dbReference type="Proteomes" id="UP000000589">
    <property type="component" value="Chromosome 18"/>
</dbReference>
<dbReference type="RNAct" id="P09036">
    <property type="molecule type" value="protein"/>
</dbReference>
<dbReference type="Bgee" id="ENSMUSG00000024503">
    <property type="expression patterns" value="Expressed in prostate gland ventral lobe and 81 other cell types or tissues"/>
</dbReference>
<dbReference type="GO" id="GO:0005615">
    <property type="term" value="C:extracellular space"/>
    <property type="evidence" value="ECO:0000314"/>
    <property type="project" value="MGI"/>
</dbReference>
<dbReference type="GO" id="GO:0030414">
    <property type="term" value="F:peptidase inhibitor activity"/>
    <property type="evidence" value="ECO:0000314"/>
    <property type="project" value="MGI"/>
</dbReference>
<dbReference type="GO" id="GO:0004867">
    <property type="term" value="F:serine-type endopeptidase inhibitor activity"/>
    <property type="evidence" value="ECO:0000314"/>
    <property type="project" value="MGI"/>
</dbReference>
<dbReference type="GO" id="GO:0090281">
    <property type="term" value="P:negative regulation of calcium ion import"/>
    <property type="evidence" value="ECO:0000314"/>
    <property type="project" value="MGI"/>
</dbReference>
<dbReference type="GO" id="GO:0010751">
    <property type="term" value="P:negative regulation of nitric oxide mediated signal transduction"/>
    <property type="evidence" value="ECO:0000314"/>
    <property type="project" value="MGI"/>
</dbReference>
<dbReference type="GO" id="GO:0007263">
    <property type="term" value="P:nitric oxide mediated signal transduction"/>
    <property type="evidence" value="ECO:0000314"/>
    <property type="project" value="MGI"/>
</dbReference>
<dbReference type="GO" id="GO:0060046">
    <property type="term" value="P:regulation of acrosome reaction"/>
    <property type="evidence" value="ECO:0000314"/>
    <property type="project" value="MGI"/>
</dbReference>
<dbReference type="GO" id="GO:2001256">
    <property type="term" value="P:regulation of store-operated calcium entry"/>
    <property type="evidence" value="ECO:0000314"/>
    <property type="project" value="MGI"/>
</dbReference>
<dbReference type="GO" id="GO:0048240">
    <property type="term" value="P:sperm capacitation"/>
    <property type="evidence" value="ECO:0000314"/>
    <property type="project" value="MGI"/>
</dbReference>
<dbReference type="CDD" id="cd01327">
    <property type="entry name" value="KAZAL_PSTI"/>
    <property type="match status" value="1"/>
</dbReference>
<dbReference type="FunFam" id="3.30.60.30:FF:000031">
    <property type="entry name" value="Serine protease inhibitor Kazal-type 2"/>
    <property type="match status" value="1"/>
</dbReference>
<dbReference type="Gene3D" id="3.30.60.30">
    <property type="match status" value="1"/>
</dbReference>
<dbReference type="InterPro" id="IPR002350">
    <property type="entry name" value="Kazal_dom"/>
</dbReference>
<dbReference type="InterPro" id="IPR036058">
    <property type="entry name" value="Kazal_dom_sf"/>
</dbReference>
<dbReference type="InterPro" id="IPR001239">
    <property type="entry name" value="Prot_inh_Kazal-m"/>
</dbReference>
<dbReference type="PANTHER" id="PTHR21312">
    <property type="entry name" value="SERINE PROTEASE INHIBITOR"/>
    <property type="match status" value="1"/>
</dbReference>
<dbReference type="PANTHER" id="PTHR21312:SF27">
    <property type="entry name" value="SERINE PROTEASE INHIBITOR KAZAL-TYPE 1"/>
    <property type="match status" value="1"/>
</dbReference>
<dbReference type="Pfam" id="PF00050">
    <property type="entry name" value="Kazal_1"/>
    <property type="match status" value="1"/>
</dbReference>
<dbReference type="PRINTS" id="PR00290">
    <property type="entry name" value="KAZALINHBTR"/>
</dbReference>
<dbReference type="SMART" id="SM00280">
    <property type="entry name" value="KAZAL"/>
    <property type="match status" value="1"/>
</dbReference>
<dbReference type="SUPFAM" id="SSF100895">
    <property type="entry name" value="Kazal-type serine protease inhibitors"/>
    <property type="match status" value="1"/>
</dbReference>
<dbReference type="PROSITE" id="PS00282">
    <property type="entry name" value="KAZAL_1"/>
    <property type="match status" value="1"/>
</dbReference>
<dbReference type="PROSITE" id="PS51465">
    <property type="entry name" value="KAZAL_2"/>
    <property type="match status" value="1"/>
</dbReference>
<feature type="signal peptide" evidence="1">
    <location>
        <begin position="1"/>
        <end position="23"/>
    </location>
</feature>
<feature type="chain" id="PRO_0000016568" description="Serine protease inhibitor Kazal-type 1">
    <location>
        <begin position="24"/>
        <end position="80"/>
    </location>
</feature>
<feature type="domain" description="Kazal-like" evidence="2">
    <location>
        <begin position="27"/>
        <end position="80"/>
    </location>
</feature>
<feature type="site" description="Reactive bond for trypsin" evidence="3 5">
    <location>
        <begin position="42"/>
        <end position="43"/>
    </location>
</feature>
<feature type="site" description="Necessary for sperm binding" evidence="8">
    <location>
        <begin position="44"/>
        <end position="45"/>
    </location>
</feature>
<feature type="disulfide bond" evidence="2">
    <location>
        <begin position="33"/>
        <end position="62"/>
    </location>
</feature>
<feature type="disulfide bond" evidence="2">
    <location>
        <begin position="40"/>
        <end position="59"/>
    </location>
</feature>
<feature type="disulfide bond" evidence="2">
    <location>
        <begin position="48"/>
        <end position="80"/>
    </location>
</feature>
<feature type="mutagenesis site" description="Abolishes trypsin inhibitor activity. No effect on sperm binding." evidence="3">
    <original>R</original>
    <variation>L</variation>
    <location>
        <position position="42"/>
    </location>
</feature>
<feature type="mutagenesis site" description="Severely impairs sperm binding. No effect on trypsin inhibitor activity." evidence="3">
    <original>Y</original>
    <variation>V</variation>
    <location>
        <position position="44"/>
    </location>
</feature>
<feature type="mutagenesis site" description="Fails to bind sperm. No effect on trypsin inhibitor activity." evidence="3">
    <original>D</original>
    <variation>G</variation>
    <location>
        <position position="45"/>
    </location>
</feature>
<feature type="mutagenesis site" description="No effect on trypsin inhibitor activity or sperm binding." evidence="3">
    <original>R</original>
    <variation>G</variation>
    <location>
        <position position="66"/>
    </location>
</feature>
<feature type="mutagenesis site" description="No effect on trypsin inhibitor activity or sperm binding." evidence="3">
    <original>K</original>
    <variation>S</variation>
    <location>
        <position position="67"/>
    </location>
</feature>
<feature type="mutagenesis site" description="No effect on trypsin inhibitor activity or sperm binding." evidence="3">
    <original>R</original>
    <variation>T</variation>
    <location>
        <position position="68"/>
    </location>
</feature>
<protein>
    <recommendedName>
        <fullName evidence="12">Serine protease inhibitor Kazal-type 1</fullName>
    </recommendedName>
    <alternativeName>
        <fullName evidence="11">P12</fullName>
    </alternativeName>
    <alternativeName>
        <fullName evidence="11">Prostatic secretory glycoprotein</fullName>
    </alternativeName>
    <alternativeName>
        <fullName evidence="9">Serine protease inhibitor Kazal-type 3</fullName>
    </alternativeName>
</protein>
<keyword id="KW-0903">Direct protein sequencing</keyword>
<keyword id="KW-1015">Disulfide bond</keyword>
<keyword id="KW-0646">Protease inhibitor</keyword>
<keyword id="KW-1185">Reference proteome</keyword>
<keyword id="KW-0964">Secreted</keyword>
<keyword id="KW-0722">Serine protease inhibitor</keyword>
<keyword id="KW-0732">Signal</keyword>
<proteinExistence type="evidence at protein level"/>
<organism>
    <name type="scientific">Mus musculus</name>
    <name type="common">Mouse</name>
    <dbReference type="NCBI Taxonomy" id="10090"/>
    <lineage>
        <taxon>Eukaryota</taxon>
        <taxon>Metazoa</taxon>
        <taxon>Chordata</taxon>
        <taxon>Craniata</taxon>
        <taxon>Vertebrata</taxon>
        <taxon>Euteleostomi</taxon>
        <taxon>Mammalia</taxon>
        <taxon>Eutheria</taxon>
        <taxon>Euarchontoglires</taxon>
        <taxon>Glires</taxon>
        <taxon>Rodentia</taxon>
        <taxon>Myomorpha</taxon>
        <taxon>Muroidea</taxon>
        <taxon>Muridae</taxon>
        <taxon>Murinae</taxon>
        <taxon>Mus</taxon>
        <taxon>Mus</taxon>
    </lineage>
</organism>
<accession>P09036</accession>
<accession>Q5M9M3</accession>
<reference key="1">
    <citation type="journal article" date="1987" name="EMBO J.">
        <title>A secretory protease inhibitor requires androgens for its expression in male sex accessory tissues but is expressed constitutively in pancreas.</title>
        <authorList>
            <person name="Mills J.S."/>
            <person name="Needham M."/>
            <person name="Parker M.G."/>
        </authorList>
    </citation>
    <scope>NUCLEOTIDE SEQUENCE [MRNA]</scope>
    <scope>FUNCTION</scope>
    <scope>INDUCTION</scope>
    <source>
        <strain>C57BL/6J</strain>
    </source>
</reference>
<reference key="2">
    <citation type="journal article" date="2005" name="Science">
        <title>The transcriptional landscape of the mammalian genome.</title>
        <authorList>
            <person name="Carninci P."/>
            <person name="Kasukawa T."/>
            <person name="Katayama S."/>
            <person name="Gough J."/>
            <person name="Frith M.C."/>
            <person name="Maeda N."/>
            <person name="Oyama R."/>
            <person name="Ravasi T."/>
            <person name="Lenhard B."/>
            <person name="Wells C."/>
            <person name="Kodzius R."/>
            <person name="Shimokawa K."/>
            <person name="Bajic V.B."/>
            <person name="Brenner S.E."/>
            <person name="Batalov S."/>
            <person name="Forrest A.R."/>
            <person name="Zavolan M."/>
            <person name="Davis M.J."/>
            <person name="Wilming L.G."/>
            <person name="Aidinis V."/>
            <person name="Allen J.E."/>
            <person name="Ambesi-Impiombato A."/>
            <person name="Apweiler R."/>
            <person name="Aturaliya R.N."/>
            <person name="Bailey T.L."/>
            <person name="Bansal M."/>
            <person name="Baxter L."/>
            <person name="Beisel K.W."/>
            <person name="Bersano T."/>
            <person name="Bono H."/>
            <person name="Chalk A.M."/>
            <person name="Chiu K.P."/>
            <person name="Choudhary V."/>
            <person name="Christoffels A."/>
            <person name="Clutterbuck D.R."/>
            <person name="Crowe M.L."/>
            <person name="Dalla E."/>
            <person name="Dalrymple B.P."/>
            <person name="de Bono B."/>
            <person name="Della Gatta G."/>
            <person name="di Bernardo D."/>
            <person name="Down T."/>
            <person name="Engstrom P."/>
            <person name="Fagiolini M."/>
            <person name="Faulkner G."/>
            <person name="Fletcher C.F."/>
            <person name="Fukushima T."/>
            <person name="Furuno M."/>
            <person name="Futaki S."/>
            <person name="Gariboldi M."/>
            <person name="Georgii-Hemming P."/>
            <person name="Gingeras T.R."/>
            <person name="Gojobori T."/>
            <person name="Green R.E."/>
            <person name="Gustincich S."/>
            <person name="Harbers M."/>
            <person name="Hayashi Y."/>
            <person name="Hensch T.K."/>
            <person name="Hirokawa N."/>
            <person name="Hill D."/>
            <person name="Huminiecki L."/>
            <person name="Iacono M."/>
            <person name="Ikeo K."/>
            <person name="Iwama A."/>
            <person name="Ishikawa T."/>
            <person name="Jakt M."/>
            <person name="Kanapin A."/>
            <person name="Katoh M."/>
            <person name="Kawasawa Y."/>
            <person name="Kelso J."/>
            <person name="Kitamura H."/>
            <person name="Kitano H."/>
            <person name="Kollias G."/>
            <person name="Krishnan S.P."/>
            <person name="Kruger A."/>
            <person name="Kummerfeld S.K."/>
            <person name="Kurochkin I.V."/>
            <person name="Lareau L.F."/>
            <person name="Lazarevic D."/>
            <person name="Lipovich L."/>
            <person name="Liu J."/>
            <person name="Liuni S."/>
            <person name="McWilliam S."/>
            <person name="Madan Babu M."/>
            <person name="Madera M."/>
            <person name="Marchionni L."/>
            <person name="Matsuda H."/>
            <person name="Matsuzawa S."/>
            <person name="Miki H."/>
            <person name="Mignone F."/>
            <person name="Miyake S."/>
            <person name="Morris K."/>
            <person name="Mottagui-Tabar S."/>
            <person name="Mulder N."/>
            <person name="Nakano N."/>
            <person name="Nakauchi H."/>
            <person name="Ng P."/>
            <person name="Nilsson R."/>
            <person name="Nishiguchi S."/>
            <person name="Nishikawa S."/>
            <person name="Nori F."/>
            <person name="Ohara O."/>
            <person name="Okazaki Y."/>
            <person name="Orlando V."/>
            <person name="Pang K.C."/>
            <person name="Pavan W.J."/>
            <person name="Pavesi G."/>
            <person name="Pesole G."/>
            <person name="Petrovsky N."/>
            <person name="Piazza S."/>
            <person name="Reed J."/>
            <person name="Reid J.F."/>
            <person name="Ring B.Z."/>
            <person name="Ringwald M."/>
            <person name="Rost B."/>
            <person name="Ruan Y."/>
            <person name="Salzberg S.L."/>
            <person name="Sandelin A."/>
            <person name="Schneider C."/>
            <person name="Schoenbach C."/>
            <person name="Sekiguchi K."/>
            <person name="Semple C.A."/>
            <person name="Seno S."/>
            <person name="Sessa L."/>
            <person name="Sheng Y."/>
            <person name="Shibata Y."/>
            <person name="Shimada H."/>
            <person name="Shimada K."/>
            <person name="Silva D."/>
            <person name="Sinclair B."/>
            <person name="Sperling S."/>
            <person name="Stupka E."/>
            <person name="Sugiura K."/>
            <person name="Sultana R."/>
            <person name="Takenaka Y."/>
            <person name="Taki K."/>
            <person name="Tammoja K."/>
            <person name="Tan S.L."/>
            <person name="Tang S."/>
            <person name="Taylor M.S."/>
            <person name="Tegner J."/>
            <person name="Teichmann S.A."/>
            <person name="Ueda H.R."/>
            <person name="van Nimwegen E."/>
            <person name="Verardo R."/>
            <person name="Wei C.L."/>
            <person name="Yagi K."/>
            <person name="Yamanishi H."/>
            <person name="Zabarovsky E."/>
            <person name="Zhu S."/>
            <person name="Zimmer A."/>
            <person name="Hide W."/>
            <person name="Bult C."/>
            <person name="Grimmond S.M."/>
            <person name="Teasdale R.D."/>
            <person name="Liu E.T."/>
            <person name="Brusic V."/>
            <person name="Quackenbush J."/>
            <person name="Wahlestedt C."/>
            <person name="Mattick J.S."/>
            <person name="Hume D.A."/>
            <person name="Kai C."/>
            <person name="Sasaki D."/>
            <person name="Tomaru Y."/>
            <person name="Fukuda S."/>
            <person name="Kanamori-Katayama M."/>
            <person name="Suzuki M."/>
            <person name="Aoki J."/>
            <person name="Arakawa T."/>
            <person name="Iida J."/>
            <person name="Imamura K."/>
            <person name="Itoh M."/>
            <person name="Kato T."/>
            <person name="Kawaji H."/>
            <person name="Kawagashira N."/>
            <person name="Kawashima T."/>
            <person name="Kojima M."/>
            <person name="Kondo S."/>
            <person name="Konno H."/>
            <person name="Nakano K."/>
            <person name="Ninomiya N."/>
            <person name="Nishio T."/>
            <person name="Okada M."/>
            <person name="Plessy C."/>
            <person name="Shibata K."/>
            <person name="Shiraki T."/>
            <person name="Suzuki S."/>
            <person name="Tagami M."/>
            <person name="Waki K."/>
            <person name="Watahiki A."/>
            <person name="Okamura-Oho Y."/>
            <person name="Suzuki H."/>
            <person name="Kawai J."/>
            <person name="Hayashizaki Y."/>
        </authorList>
    </citation>
    <scope>NUCLEOTIDE SEQUENCE [LARGE SCALE MRNA]</scope>
    <source>
        <strain>C57BL/6J</strain>
        <tissue>Pancreas</tissue>
    </source>
</reference>
<reference key="3">
    <citation type="journal article" date="2004" name="Genome Res.">
        <title>The status, quality, and expansion of the NIH full-length cDNA project: the Mammalian Gene Collection (MGC).</title>
        <authorList>
            <consortium name="The MGC Project Team"/>
        </authorList>
    </citation>
    <scope>NUCLEOTIDE SEQUENCE [LARGE SCALE MRNA]</scope>
    <source>
        <tissue>Kidney</tissue>
    </source>
</reference>
<reference key="4">
    <citation type="journal article" date="1991" name="Arch. Biochem. Biophys.">
        <title>Purification and characterization of a trypsin inhibitor from mouse seminal vesicle secretion.</title>
        <authorList>
            <person name="Lai M.-L."/>
            <person name="Chen S.-W."/>
            <person name="Chen Y.-H."/>
        </authorList>
    </citation>
    <scope>PROTEIN SEQUENCE OF 43-47; 49-61 AND 63-72</scope>
    <scope>SUBCELLULAR LOCATION</scope>
</reference>
<reference key="5">
    <citation type="journal article" date="1998" name="Biol. Reprod.">
        <title>Developmental profile of a caltrin-like protease inhibitor, P12, in mouse seminal vesicle and characterization of its binding sites on sperm surface.</title>
        <authorList>
            <person name="Chen L.-Y."/>
            <person name="Lin Y.-H."/>
            <person name="Lai M.-L."/>
            <person name="Chen Y.-H."/>
        </authorList>
    </citation>
    <scope>FUNCTION</scope>
    <scope>TISSUE SPECIFICITY</scope>
    <scope>DEVELOPMENTAL STAGE</scope>
</reference>
<reference key="6">
    <citation type="journal article" date="2004" name="Biol. Reprod.">
        <title>Distinction of sperm-binding site and reactive site for trypsin inhibition on p12 secreted from the accessory sex glands of male mice.</title>
        <authorList>
            <person name="Luo C.W."/>
            <person name="Lin H.J."/>
            <person name="Gopinath S.C."/>
            <person name="Chen Y.H."/>
        </authorList>
    </citation>
    <scope>FUNCTION</scope>
    <scope>MUTAGENESIS OF ARG-42; TYR-44; ASP-45; ARG-66; LYS-67 AND ARG-68</scope>
</reference>
<reference key="7">
    <citation type="journal article" date="2005" name="Gastroenterology">
        <title>Autophagic cell death of pancreatic acinar cells in serine protease inhibitor Kazal type 3-deficient mice.</title>
        <authorList>
            <person name="Ohmuraya M."/>
            <person name="Hirota M."/>
            <person name="Araki M."/>
            <person name="Mizushima N."/>
            <person name="Matsui M."/>
            <person name="Mizumoto T."/>
            <person name="Haruna K."/>
            <person name="Kume S."/>
            <person name="Takeya M."/>
            <person name="Ogawa M."/>
            <person name="Araki K."/>
            <person name="Yamamura K."/>
        </authorList>
    </citation>
    <scope>FUNCTION</scope>
    <scope>DISRUPTION PHENOTYPE</scope>
</reference>
<reference key="8">
    <citation type="journal article" date="2012" name="Reproduction">
        <title>SPINK3 modulates mouse sperm physiology through the reduction of nitric oxide level independently of its trypsin inhibitory activity.</title>
        <authorList>
            <person name="Zalazar L."/>
            <person name="Saez Lancellotti T.E."/>
            <person name="Clementi M."/>
            <person name="Lombardo C."/>
            <person name="Lamattina L."/>
            <person name="De Castro R."/>
            <person name="Fornes M.W."/>
            <person name="Cesari A."/>
        </authorList>
    </citation>
    <scope>FUNCTION</scope>
</reference>
<comment type="function">
    <text evidence="3 4 6 7">Serine protease inhibitor which exhibits anti-trypsin activity (PubMed:14645103, PubMed:22228629, PubMed:3428272). In the pancreas, protects against trypsin-catalyzed premature activation of zymogens (PubMed:16083722).</text>
</comment>
<comment type="function">
    <text evidence="3 4 6 8">In the male reproductive tract, binds to sperm heads where it modulates sperm capacitance by inhibiting calcium uptake and nitrogen oxide (NO) production (PubMed:14645103, PubMed:16083722, PubMed:22228629, PubMed:9828198).</text>
</comment>
<comment type="subcellular location">
    <subcellularLocation>
        <location evidence="5">Secreted</location>
    </subcellularLocation>
</comment>
<comment type="tissue specificity">
    <text evidence="8">In the genital tract, expressed only in male accessory glands including seminal vesicle, coagulating gland and prostate.</text>
</comment>
<comment type="developmental stage">
    <text evidence="8">In the seminal vesicle, not expressed during prepubertal stages; expression coincides with maturation.</text>
</comment>
<comment type="induction">
    <text evidence="7">By androgens in adult male sex accessory glands. Expressed constitutively in pancreas.</text>
</comment>
<comment type="disruption phenotype">
    <text evidence="4">Lethal with no survival past two weeks of age. Animals are small and show severe, progressive degeneration of pancreatic tissue associated with autophagic cell death.</text>
</comment>